<keyword id="KW-0963">Cytoplasm</keyword>
<keyword id="KW-0489">Methyltransferase</keyword>
<keyword id="KW-1185">Reference proteome</keyword>
<keyword id="KW-0694">RNA-binding</keyword>
<keyword id="KW-0698">rRNA processing</keyword>
<keyword id="KW-0949">S-adenosyl-L-methionine</keyword>
<keyword id="KW-0808">Transferase</keyword>
<evidence type="ECO:0000255" key="1">
    <source>
        <dbReference type="HAMAP-Rule" id="MF_00607"/>
    </source>
</evidence>
<sequence>MRIADYSVTRAILERHGFTFKKSFGQNFLTDTNILQKIVDTAEIDKKVNVIEIGPGIGALTEFLAESAAEVMAFEIDDRLVPILADTLRDFDNVTVVNQDILKVNLAQYIAEFKNPDLPIKVVANLPYYITTPILMHLIESGIPFSEFVVMMQREVADRISAQPNTKAYGSLSIAVQYYMTAKVAFIVPRKVFVPAPNVDSAILKMVRRERPAVEVQDEKFFFKVSKASFVHRRKTLWNNLTSYFGKSEETKGKLTAALERAELSPSVRGEALSLEEFACLADALKSEGL</sequence>
<gene>
    <name evidence="1" type="primary">rsmA</name>
    <name evidence="1" type="synonym">ksgA</name>
    <name type="ordered locus">SSA_2123</name>
</gene>
<reference key="1">
    <citation type="journal article" date="2007" name="J. Bacteriol.">
        <title>Genome of the opportunistic pathogen Streptococcus sanguinis.</title>
        <authorList>
            <person name="Xu P."/>
            <person name="Alves J.M."/>
            <person name="Kitten T."/>
            <person name="Brown A."/>
            <person name="Chen Z."/>
            <person name="Ozaki L.S."/>
            <person name="Manque P."/>
            <person name="Ge X."/>
            <person name="Serrano M.G."/>
            <person name="Puiu D."/>
            <person name="Hendricks S."/>
            <person name="Wang Y."/>
            <person name="Chaplin M.D."/>
            <person name="Akan D."/>
            <person name="Paik S."/>
            <person name="Peterson D.L."/>
            <person name="Macrina F.L."/>
            <person name="Buck G.A."/>
        </authorList>
    </citation>
    <scope>NUCLEOTIDE SEQUENCE [LARGE SCALE GENOMIC DNA]</scope>
    <source>
        <strain>SK36</strain>
    </source>
</reference>
<dbReference type="EC" id="2.1.1.182" evidence="1"/>
<dbReference type="EMBL" id="CP000387">
    <property type="protein sequence ID" value="ABN45490.1"/>
    <property type="molecule type" value="Genomic_DNA"/>
</dbReference>
<dbReference type="RefSeq" id="WP_011837565.1">
    <property type="nucleotide sequence ID" value="NC_009009.1"/>
</dbReference>
<dbReference type="RefSeq" id="YP_001036040.1">
    <property type="nucleotide sequence ID" value="NC_009009.1"/>
</dbReference>
<dbReference type="SMR" id="A3CQN5"/>
<dbReference type="STRING" id="388919.SSA_2123"/>
<dbReference type="KEGG" id="ssa:SSA_2123"/>
<dbReference type="PATRIC" id="fig|388919.9.peg.2010"/>
<dbReference type="eggNOG" id="COG0030">
    <property type="taxonomic scope" value="Bacteria"/>
</dbReference>
<dbReference type="HOGENOM" id="CLU_041220_0_0_9"/>
<dbReference type="OrthoDB" id="9814755at2"/>
<dbReference type="Proteomes" id="UP000002148">
    <property type="component" value="Chromosome"/>
</dbReference>
<dbReference type="GO" id="GO:0005829">
    <property type="term" value="C:cytosol"/>
    <property type="evidence" value="ECO:0007669"/>
    <property type="project" value="TreeGrafter"/>
</dbReference>
<dbReference type="GO" id="GO:0052908">
    <property type="term" value="F:16S rRNA (adenine(1518)-N(6)/adenine(1519)-N(6))-dimethyltransferase activity"/>
    <property type="evidence" value="ECO:0007669"/>
    <property type="project" value="UniProtKB-EC"/>
</dbReference>
<dbReference type="GO" id="GO:0003723">
    <property type="term" value="F:RNA binding"/>
    <property type="evidence" value="ECO:0007669"/>
    <property type="project" value="UniProtKB-KW"/>
</dbReference>
<dbReference type="CDD" id="cd02440">
    <property type="entry name" value="AdoMet_MTases"/>
    <property type="match status" value="1"/>
</dbReference>
<dbReference type="FunFam" id="3.40.50.150:FF:000023">
    <property type="entry name" value="Ribosomal RNA small subunit methyltransferase A"/>
    <property type="match status" value="1"/>
</dbReference>
<dbReference type="Gene3D" id="1.10.8.100">
    <property type="entry name" value="Ribosomal RNA adenine dimethylase-like, domain 2"/>
    <property type="match status" value="1"/>
</dbReference>
<dbReference type="Gene3D" id="3.40.50.150">
    <property type="entry name" value="Vaccinia Virus protein VP39"/>
    <property type="match status" value="1"/>
</dbReference>
<dbReference type="HAMAP" id="MF_00607">
    <property type="entry name" value="16SrRNA_methyltr_A"/>
    <property type="match status" value="1"/>
</dbReference>
<dbReference type="InterPro" id="IPR001737">
    <property type="entry name" value="KsgA/Erm"/>
</dbReference>
<dbReference type="InterPro" id="IPR023165">
    <property type="entry name" value="rRNA_Ade_diMease-like_C"/>
</dbReference>
<dbReference type="InterPro" id="IPR020596">
    <property type="entry name" value="rRNA_Ade_Mease_Trfase_CS"/>
</dbReference>
<dbReference type="InterPro" id="IPR020598">
    <property type="entry name" value="rRNA_Ade_methylase_Trfase_N"/>
</dbReference>
<dbReference type="InterPro" id="IPR011530">
    <property type="entry name" value="rRNA_adenine_dimethylase"/>
</dbReference>
<dbReference type="InterPro" id="IPR029063">
    <property type="entry name" value="SAM-dependent_MTases_sf"/>
</dbReference>
<dbReference type="NCBIfam" id="TIGR00755">
    <property type="entry name" value="ksgA"/>
    <property type="match status" value="1"/>
</dbReference>
<dbReference type="PANTHER" id="PTHR11727">
    <property type="entry name" value="DIMETHYLADENOSINE TRANSFERASE"/>
    <property type="match status" value="1"/>
</dbReference>
<dbReference type="PANTHER" id="PTHR11727:SF7">
    <property type="entry name" value="DIMETHYLADENOSINE TRANSFERASE-RELATED"/>
    <property type="match status" value="1"/>
</dbReference>
<dbReference type="Pfam" id="PF00398">
    <property type="entry name" value="RrnaAD"/>
    <property type="match status" value="1"/>
</dbReference>
<dbReference type="SMART" id="SM00650">
    <property type="entry name" value="rADc"/>
    <property type="match status" value="1"/>
</dbReference>
<dbReference type="SUPFAM" id="SSF53335">
    <property type="entry name" value="S-adenosyl-L-methionine-dependent methyltransferases"/>
    <property type="match status" value="1"/>
</dbReference>
<dbReference type="PROSITE" id="PS01131">
    <property type="entry name" value="RRNA_A_DIMETH"/>
    <property type="match status" value="1"/>
</dbReference>
<dbReference type="PROSITE" id="PS51689">
    <property type="entry name" value="SAM_RNA_A_N6_MT"/>
    <property type="match status" value="1"/>
</dbReference>
<name>RSMA_STRSV</name>
<protein>
    <recommendedName>
        <fullName evidence="1">Ribosomal RNA small subunit methyltransferase A</fullName>
        <ecNumber evidence="1">2.1.1.182</ecNumber>
    </recommendedName>
    <alternativeName>
        <fullName evidence="1">16S rRNA (adenine(1518)-N(6)/adenine(1519)-N(6))-dimethyltransferase</fullName>
    </alternativeName>
    <alternativeName>
        <fullName evidence="1">16S rRNA dimethyladenosine transferase</fullName>
    </alternativeName>
    <alternativeName>
        <fullName evidence="1">16S rRNA dimethylase</fullName>
    </alternativeName>
    <alternativeName>
        <fullName evidence="1">S-adenosylmethionine-6-N', N'-adenosyl(rRNA) dimethyltransferase</fullName>
    </alternativeName>
</protein>
<organism>
    <name type="scientific">Streptococcus sanguinis (strain SK36)</name>
    <dbReference type="NCBI Taxonomy" id="388919"/>
    <lineage>
        <taxon>Bacteria</taxon>
        <taxon>Bacillati</taxon>
        <taxon>Bacillota</taxon>
        <taxon>Bacilli</taxon>
        <taxon>Lactobacillales</taxon>
        <taxon>Streptococcaceae</taxon>
        <taxon>Streptococcus</taxon>
    </lineage>
</organism>
<comment type="function">
    <text evidence="1">Specifically dimethylates two adjacent adenosines (A1518 and A1519) in the loop of a conserved hairpin near the 3'-end of 16S rRNA in the 30S particle. May play a critical role in biogenesis of 30S subunits.</text>
</comment>
<comment type="catalytic activity">
    <reaction evidence="1">
        <text>adenosine(1518)/adenosine(1519) in 16S rRNA + 4 S-adenosyl-L-methionine = N(6)-dimethyladenosine(1518)/N(6)-dimethyladenosine(1519) in 16S rRNA + 4 S-adenosyl-L-homocysteine + 4 H(+)</text>
        <dbReference type="Rhea" id="RHEA:19609"/>
        <dbReference type="Rhea" id="RHEA-COMP:10232"/>
        <dbReference type="Rhea" id="RHEA-COMP:10233"/>
        <dbReference type="ChEBI" id="CHEBI:15378"/>
        <dbReference type="ChEBI" id="CHEBI:57856"/>
        <dbReference type="ChEBI" id="CHEBI:59789"/>
        <dbReference type="ChEBI" id="CHEBI:74411"/>
        <dbReference type="ChEBI" id="CHEBI:74493"/>
        <dbReference type="EC" id="2.1.1.182"/>
    </reaction>
</comment>
<comment type="subcellular location">
    <subcellularLocation>
        <location evidence="1">Cytoplasm</location>
    </subcellularLocation>
</comment>
<comment type="similarity">
    <text evidence="1">Belongs to the class I-like SAM-binding methyltransferase superfamily. rRNA adenine N(6)-methyltransferase family. RsmA subfamily.</text>
</comment>
<accession>A3CQN5</accession>
<feature type="chain" id="PRO_1000056681" description="Ribosomal RNA small subunit methyltransferase A">
    <location>
        <begin position="1"/>
        <end position="290"/>
    </location>
</feature>
<feature type="binding site" evidence="1">
    <location>
        <position position="27"/>
    </location>
    <ligand>
        <name>S-adenosyl-L-methionine</name>
        <dbReference type="ChEBI" id="CHEBI:59789"/>
    </ligand>
</feature>
<feature type="binding site" evidence="1">
    <location>
        <position position="29"/>
    </location>
    <ligand>
        <name>S-adenosyl-L-methionine</name>
        <dbReference type="ChEBI" id="CHEBI:59789"/>
    </ligand>
</feature>
<feature type="binding site" evidence="1">
    <location>
        <position position="54"/>
    </location>
    <ligand>
        <name>S-adenosyl-L-methionine</name>
        <dbReference type="ChEBI" id="CHEBI:59789"/>
    </ligand>
</feature>
<feature type="binding site" evidence="1">
    <location>
        <position position="75"/>
    </location>
    <ligand>
        <name>S-adenosyl-L-methionine</name>
        <dbReference type="ChEBI" id="CHEBI:59789"/>
    </ligand>
</feature>
<feature type="binding site" evidence="1">
    <location>
        <position position="100"/>
    </location>
    <ligand>
        <name>S-adenosyl-L-methionine</name>
        <dbReference type="ChEBI" id="CHEBI:59789"/>
    </ligand>
</feature>
<feature type="binding site" evidence="1">
    <location>
        <position position="125"/>
    </location>
    <ligand>
        <name>S-adenosyl-L-methionine</name>
        <dbReference type="ChEBI" id="CHEBI:59789"/>
    </ligand>
</feature>
<proteinExistence type="inferred from homology"/>